<reference key="1">
    <citation type="journal article" date="1998" name="Arch. Virol.">
        <title>Phylogenetic analyses of the matrix and non-structural genes of equine influenza viruses.</title>
        <authorList>
            <person name="Lindstrom S."/>
            <person name="Endo A."/>
            <person name="Sugita S."/>
            <person name="Pecoraro M."/>
            <person name="Hiromoto Y."/>
            <person name="Kamada M."/>
            <person name="Takahashi T."/>
            <person name="Nerome K."/>
        </authorList>
    </citation>
    <scope>NUCLEOTIDE SEQUENCE [GENOMIC RNA]</scope>
</reference>
<evidence type="ECO:0000255" key="1">
    <source>
        <dbReference type="HAMAP-Rule" id="MF_04069"/>
    </source>
</evidence>
<evidence type="ECO:0000256" key="2">
    <source>
        <dbReference type="SAM" id="MobiDB-lite"/>
    </source>
</evidence>
<name>M2_I77A9</name>
<sequence length="97" mass="11158">MSLLTEVETPTRNGWECKCSDSSDPLVIAASIIGILHLILWILDRLFFKCIYRRLKYGLKRGPSTEGVPESMREEYRQEQQSAVDVDDGHFVNIELE</sequence>
<dbReference type="EMBL" id="AF001686">
    <property type="protein sequence ID" value="AAC31297.1"/>
    <property type="molecule type" value="Genomic_RNA"/>
</dbReference>
<dbReference type="SMR" id="Q77ZJ9"/>
<dbReference type="GO" id="GO:0020002">
    <property type="term" value="C:host cell plasma membrane"/>
    <property type="evidence" value="ECO:0007669"/>
    <property type="project" value="UniProtKB-SubCell"/>
</dbReference>
<dbReference type="GO" id="GO:0016020">
    <property type="term" value="C:membrane"/>
    <property type="evidence" value="ECO:0007669"/>
    <property type="project" value="UniProtKB-UniRule"/>
</dbReference>
<dbReference type="GO" id="GO:0055036">
    <property type="term" value="C:virion membrane"/>
    <property type="evidence" value="ECO:0007669"/>
    <property type="project" value="UniProtKB-SubCell"/>
</dbReference>
<dbReference type="GO" id="GO:0005216">
    <property type="term" value="F:monoatomic ion channel activity"/>
    <property type="evidence" value="ECO:0007669"/>
    <property type="project" value="UniProtKB-UniRule"/>
</dbReference>
<dbReference type="GO" id="GO:0015078">
    <property type="term" value="F:proton transmembrane transporter activity"/>
    <property type="evidence" value="ECO:0007669"/>
    <property type="project" value="UniProtKB-UniRule"/>
</dbReference>
<dbReference type="GO" id="GO:0051259">
    <property type="term" value="P:protein complex oligomerization"/>
    <property type="evidence" value="ECO:0007669"/>
    <property type="project" value="UniProtKB-UniRule"/>
</dbReference>
<dbReference type="GO" id="GO:0044694">
    <property type="term" value="P:symbiont genome entry into host cell via pore formation in plasma membrane"/>
    <property type="evidence" value="ECO:0007669"/>
    <property type="project" value="UniProtKB-UniRule"/>
</dbReference>
<dbReference type="GO" id="GO:0140321">
    <property type="term" value="P:symbiont-mediated suppression of host autophagy"/>
    <property type="evidence" value="ECO:0007669"/>
    <property type="project" value="UniProtKB-KW"/>
</dbReference>
<dbReference type="Gene3D" id="6.10.250.1640">
    <property type="match status" value="1"/>
</dbReference>
<dbReference type="HAMAP" id="MF_04069">
    <property type="entry name" value="INFV_M2"/>
    <property type="match status" value="1"/>
</dbReference>
<dbReference type="InterPro" id="IPR002089">
    <property type="entry name" value="Flu_M2"/>
</dbReference>
<dbReference type="Pfam" id="PF00599">
    <property type="entry name" value="Flu_M2"/>
    <property type="match status" value="1"/>
</dbReference>
<organism>
    <name type="scientific">Influenza A virus (strain A/Equine/New Market/1/1977 H7N7)</name>
    <dbReference type="NCBI Taxonomy" id="217831"/>
    <lineage>
        <taxon>Viruses</taxon>
        <taxon>Riboviria</taxon>
        <taxon>Orthornavirae</taxon>
        <taxon>Negarnaviricota</taxon>
        <taxon>Polyploviricotina</taxon>
        <taxon>Insthoviricetes</taxon>
        <taxon>Articulavirales</taxon>
        <taxon>Orthomyxoviridae</taxon>
        <taxon>Alphainfluenzavirus</taxon>
        <taxon>Alphainfluenzavirus influenzae</taxon>
        <taxon>Influenza A virus</taxon>
    </lineage>
</organism>
<protein>
    <recommendedName>
        <fullName evidence="1">Matrix protein 2</fullName>
    </recommendedName>
    <alternativeName>
        <fullName evidence="1">Proton channel protein M2</fullName>
    </alternativeName>
</protein>
<feature type="chain" id="PRO_0000326358" description="Matrix protein 2">
    <location>
        <begin position="1"/>
        <end position="97"/>
    </location>
</feature>
<feature type="topological domain" description="Virion surface" evidence="1">
    <location>
        <begin position="1"/>
        <end position="22"/>
    </location>
</feature>
<feature type="transmembrane region" description="Helical; Signal-anchor for type III membrane protein" evidence="1">
    <location>
        <begin position="23"/>
        <end position="43"/>
    </location>
</feature>
<feature type="topological domain" description="Intravirion" evidence="1">
    <location>
        <begin position="44"/>
        <end position="97"/>
    </location>
</feature>
<feature type="region of interest" description="Disordered" evidence="2">
    <location>
        <begin position="60"/>
        <end position="83"/>
    </location>
</feature>
<feature type="site" description="Essential for channel activity, possibly by being protonated during channel activation, and by forming the channel gate and the selective filter" evidence="1">
    <location>
        <position position="37"/>
    </location>
</feature>
<feature type="site" description="Seems to be involved in pH gating" evidence="1">
    <location>
        <position position="41"/>
    </location>
</feature>
<feature type="modified residue" description="Phosphoserine; by host" evidence="1">
    <location>
        <position position="64"/>
    </location>
</feature>
<feature type="modified residue" description="Phosphoserine; by host" evidence="1">
    <location>
        <position position="82"/>
    </location>
</feature>
<feature type="lipid moiety-binding region" description="S-palmitoyl cysteine; by host" evidence="1">
    <location>
        <position position="50"/>
    </location>
</feature>
<feature type="disulfide bond" description="Interchain (with C-17)" evidence="1">
    <location>
        <position position="17"/>
    </location>
</feature>
<feature type="disulfide bond" description="Interchain (with C-19)" evidence="1">
    <location>
        <position position="19"/>
    </location>
</feature>
<accession>Q77ZJ9</accession>
<proteinExistence type="inferred from homology"/>
<keyword id="KW-0025">Alternative splicing</keyword>
<keyword id="KW-1015">Disulfide bond</keyword>
<keyword id="KW-1032">Host cell membrane</keyword>
<keyword id="KW-1043">Host membrane</keyword>
<keyword id="KW-0945">Host-virus interaction</keyword>
<keyword id="KW-0375">Hydrogen ion transport</keyword>
<keyword id="KW-1083">Inhibition of host autophagy by virus</keyword>
<keyword id="KW-0407">Ion channel</keyword>
<keyword id="KW-0406">Ion transport</keyword>
<keyword id="KW-0449">Lipoprotein</keyword>
<keyword id="KW-0472">Membrane</keyword>
<keyword id="KW-0564">Palmitate</keyword>
<keyword id="KW-0597">Phosphoprotein</keyword>
<keyword id="KW-0735">Signal-anchor</keyword>
<keyword id="KW-0812">Transmembrane</keyword>
<keyword id="KW-1133">Transmembrane helix</keyword>
<keyword id="KW-0813">Transport</keyword>
<keyword id="KW-1182">Viral ion channel</keyword>
<keyword id="KW-0946">Virion</keyword>
<organismHost>
    <name type="scientific">Aves</name>
    <dbReference type="NCBI Taxonomy" id="8782"/>
</organismHost>
<organismHost>
    <name type="scientific">Equus caballus</name>
    <name type="common">Horse</name>
    <dbReference type="NCBI Taxonomy" id="9796"/>
</organismHost>
<organismHost>
    <name type="scientific">Homo sapiens</name>
    <name type="common">Human</name>
    <dbReference type="NCBI Taxonomy" id="9606"/>
</organismHost>
<organismHost>
    <name type="scientific">Phocidae</name>
    <name type="common">true seals</name>
    <dbReference type="NCBI Taxonomy" id="9709"/>
</organismHost>
<comment type="function">
    <text evidence="1">Forms a proton-selective ion channel that is necessary for the efficient release of the viral genome during virus entry. After attaching to the cell surface, the virion enters the cell by endocytosis. Acidification of the endosome triggers M2 ion channel activity. The influx of protons into virion interior is believed to disrupt interactions between the viral ribonucleoprotein (RNP), matrix protein 1 (M1), and lipid bilayers, thereby freeing the viral genome from interaction with viral proteins and enabling RNA segments to migrate to the host cell nucleus, where influenza virus RNA transcription and replication occur. Also plays a role in viral proteins secretory pathway. Elevates the intravesicular pH of normally acidic compartments, such as trans-Golgi network, preventing newly formed hemagglutinin from premature switching to the fusion-active conformation.</text>
</comment>
<comment type="activity regulation">
    <text>The M2 protein from most influenza A strains is inhibited by amantadine and rimantadine, resulting in viral uncoating incapacity. Emergence of amantadine-resistant variants is usually rapid.</text>
</comment>
<comment type="subunit">
    <text evidence="1">Homotetramer; composed of two disulfide-linked dimers held together by non-covalent interactions. May interact with matrix protein 1.</text>
</comment>
<comment type="subcellular location">
    <subcellularLocation>
        <location evidence="1">Virion membrane</location>
    </subcellularLocation>
    <subcellularLocation>
        <location evidence="1">Host apical cell membrane</location>
        <topology evidence="1">Single-pass type III membrane protein</topology>
    </subcellularLocation>
    <text evidence="1">Abundantly expressed at the apical plasma membrane in infected polarized epithelial cells, in close proximity to budding and assembled virions. Minor component of virions (only 16-20 molecules/virion).</text>
</comment>
<comment type="alternative products">
    <event type="alternative splicing"/>
    <isoform>
        <id>Q77ZJ9-1</id>
        <name>M2</name>
        <sequence type="displayed"/>
    </isoform>
    <isoform>
        <id>Q9W9L6-1</id>
        <name>M1</name>
        <sequence type="external"/>
    </isoform>
    <text>Only the first 9 residues are shared by the 2 isoforms.</text>
</comment>
<comment type="domain">
    <text evidence="1">Cytoplasmic tail plays an important role in virion assembly and morphogenesis.</text>
</comment>
<comment type="miscellaneous">
    <text evidence="1">When the channel is activated, one or more imidazole moieties of His-37 probably become bi-protonated.</text>
</comment>
<comment type="similarity">
    <text evidence="1">Belongs to the influenza viruses matrix protein M2 family.</text>
</comment>
<gene>
    <name evidence="1" type="primary">M</name>
</gene>